<proteinExistence type="inferred from homology"/>
<dbReference type="EC" id="1.11.1.26" evidence="1"/>
<dbReference type="EMBL" id="AJ938182">
    <property type="protein sequence ID" value="CAI80019.1"/>
    <property type="molecule type" value="Genomic_DNA"/>
</dbReference>
<dbReference type="RefSeq" id="WP_000052781.1">
    <property type="nucleotide sequence ID" value="NC_007622.1"/>
</dbReference>
<dbReference type="SMR" id="Q2YVK2"/>
<dbReference type="KEGG" id="sab:SAB0331c"/>
<dbReference type="HOGENOM" id="CLU_042529_21_3_9"/>
<dbReference type="GO" id="GO:0005829">
    <property type="term" value="C:cytosol"/>
    <property type="evidence" value="ECO:0007669"/>
    <property type="project" value="TreeGrafter"/>
</dbReference>
<dbReference type="GO" id="GO:0102039">
    <property type="term" value="F:NADH-dependent peroxiredoxin activity"/>
    <property type="evidence" value="ECO:0007669"/>
    <property type="project" value="UniProtKB-EC"/>
</dbReference>
<dbReference type="GO" id="GO:0008379">
    <property type="term" value="F:thioredoxin peroxidase activity"/>
    <property type="evidence" value="ECO:0007669"/>
    <property type="project" value="TreeGrafter"/>
</dbReference>
<dbReference type="GO" id="GO:0045454">
    <property type="term" value="P:cell redox homeostasis"/>
    <property type="evidence" value="ECO:0007669"/>
    <property type="project" value="TreeGrafter"/>
</dbReference>
<dbReference type="GO" id="GO:0033554">
    <property type="term" value="P:cellular response to stress"/>
    <property type="evidence" value="ECO:0007669"/>
    <property type="project" value="TreeGrafter"/>
</dbReference>
<dbReference type="GO" id="GO:0042744">
    <property type="term" value="P:hydrogen peroxide catabolic process"/>
    <property type="evidence" value="ECO:0007669"/>
    <property type="project" value="TreeGrafter"/>
</dbReference>
<dbReference type="GO" id="GO:0006979">
    <property type="term" value="P:response to oxidative stress"/>
    <property type="evidence" value="ECO:0007669"/>
    <property type="project" value="InterPro"/>
</dbReference>
<dbReference type="CDD" id="cd03015">
    <property type="entry name" value="PRX_Typ2cys"/>
    <property type="match status" value="1"/>
</dbReference>
<dbReference type="FunFam" id="3.40.30.10:FF:000002">
    <property type="entry name" value="Alkyl hydroperoxide reductase C"/>
    <property type="match status" value="1"/>
</dbReference>
<dbReference type="Gene3D" id="3.40.30.10">
    <property type="entry name" value="Glutaredoxin"/>
    <property type="match status" value="1"/>
</dbReference>
<dbReference type="InterPro" id="IPR017559">
    <property type="entry name" value="AhpC"/>
</dbReference>
<dbReference type="InterPro" id="IPR000866">
    <property type="entry name" value="AhpC/TSA"/>
</dbReference>
<dbReference type="InterPro" id="IPR050217">
    <property type="entry name" value="Peroxiredoxin"/>
</dbReference>
<dbReference type="InterPro" id="IPR024706">
    <property type="entry name" value="Peroxiredoxin_AhpC-typ"/>
</dbReference>
<dbReference type="InterPro" id="IPR019479">
    <property type="entry name" value="Peroxiredoxin_C"/>
</dbReference>
<dbReference type="InterPro" id="IPR036249">
    <property type="entry name" value="Thioredoxin-like_sf"/>
</dbReference>
<dbReference type="InterPro" id="IPR013766">
    <property type="entry name" value="Thioredoxin_domain"/>
</dbReference>
<dbReference type="NCBIfam" id="TIGR03137">
    <property type="entry name" value="AhpC"/>
    <property type="match status" value="1"/>
</dbReference>
<dbReference type="PANTHER" id="PTHR10681:SF121">
    <property type="entry name" value="ALKYL HYDROPEROXIDE REDUCTASE C"/>
    <property type="match status" value="1"/>
</dbReference>
<dbReference type="PANTHER" id="PTHR10681">
    <property type="entry name" value="THIOREDOXIN PEROXIDASE"/>
    <property type="match status" value="1"/>
</dbReference>
<dbReference type="Pfam" id="PF10417">
    <property type="entry name" value="1-cysPrx_C"/>
    <property type="match status" value="1"/>
</dbReference>
<dbReference type="Pfam" id="PF00578">
    <property type="entry name" value="AhpC-TSA"/>
    <property type="match status" value="1"/>
</dbReference>
<dbReference type="PIRSF" id="PIRSF000239">
    <property type="entry name" value="AHPC"/>
    <property type="match status" value="1"/>
</dbReference>
<dbReference type="SUPFAM" id="SSF52833">
    <property type="entry name" value="Thioredoxin-like"/>
    <property type="match status" value="1"/>
</dbReference>
<dbReference type="PROSITE" id="PS51352">
    <property type="entry name" value="THIOREDOXIN_2"/>
    <property type="match status" value="1"/>
</dbReference>
<protein>
    <recommendedName>
        <fullName>Alkyl hydroperoxide reductase C</fullName>
        <ecNumber evidence="1">1.11.1.26</ecNumber>
    </recommendedName>
    <alternativeName>
        <fullName>Peroxiredoxin</fullName>
    </alternativeName>
    <alternativeName>
        <fullName>Thioredoxin peroxidase</fullName>
    </alternativeName>
</protein>
<name>AHPC_STAAB</name>
<gene>
    <name type="primary">ahpC</name>
    <name type="ordered locus">SAB0331c</name>
</gene>
<organism>
    <name type="scientific">Staphylococcus aureus (strain bovine RF122 / ET3-1)</name>
    <dbReference type="NCBI Taxonomy" id="273036"/>
    <lineage>
        <taxon>Bacteria</taxon>
        <taxon>Bacillati</taxon>
        <taxon>Bacillota</taxon>
        <taxon>Bacilli</taxon>
        <taxon>Bacillales</taxon>
        <taxon>Staphylococcaceae</taxon>
        <taxon>Staphylococcus</taxon>
    </lineage>
</organism>
<evidence type="ECO:0000250" key="1">
    <source>
        <dbReference type="UniProtKB" id="P0A251"/>
    </source>
</evidence>
<evidence type="ECO:0000250" key="2">
    <source>
        <dbReference type="UniProtKB" id="P0AE08"/>
    </source>
</evidence>
<evidence type="ECO:0000255" key="3">
    <source>
        <dbReference type="PROSITE-ProRule" id="PRU00691"/>
    </source>
</evidence>
<evidence type="ECO:0000305" key="4"/>
<accession>Q2YVK2</accession>
<keyword id="KW-0049">Antioxidant</keyword>
<keyword id="KW-0963">Cytoplasm</keyword>
<keyword id="KW-1015">Disulfide bond</keyword>
<keyword id="KW-0560">Oxidoreductase</keyword>
<keyword id="KW-0575">Peroxidase</keyword>
<keyword id="KW-0676">Redox-active center</keyword>
<reference key="1">
    <citation type="journal article" date="2007" name="PLoS ONE">
        <title>Molecular correlates of host specialization in Staphylococcus aureus.</title>
        <authorList>
            <person name="Herron-Olson L."/>
            <person name="Fitzgerald J.R."/>
            <person name="Musser J.M."/>
            <person name="Kapur V."/>
        </authorList>
    </citation>
    <scope>NUCLEOTIDE SEQUENCE [LARGE SCALE GENOMIC DNA]</scope>
    <source>
        <strain>bovine RF122 / ET3-1</strain>
    </source>
</reference>
<feature type="chain" id="PRO_0000279759" description="Alkyl hydroperoxide reductase C">
    <location>
        <begin position="1"/>
        <end position="189"/>
    </location>
</feature>
<feature type="domain" description="Thioredoxin" evidence="3">
    <location>
        <begin position="2"/>
        <end position="159"/>
    </location>
</feature>
<feature type="active site" description="Cysteine sulfenic acid (-SOH) intermediate" evidence="1">
    <location>
        <position position="49"/>
    </location>
</feature>
<feature type="disulfide bond" description="Interchain (with C-168); in linked form" evidence="1">
    <location>
        <position position="49"/>
    </location>
</feature>
<feature type="disulfide bond" description="Interchain (with C-49); in linked form" evidence="1">
    <location>
        <position position="168"/>
    </location>
</feature>
<comment type="function">
    <text evidence="1">Thiol-specific peroxidase that catalyzes the reduction of hydrogen peroxide and organic hydroperoxides to water and alcohols, respectively. Plays a role in cell protection against oxidative stress by detoxifying peroxides.</text>
</comment>
<comment type="catalytic activity">
    <reaction evidence="1">
        <text>a hydroperoxide + NADH + H(+) = an alcohol + NAD(+) + H2O</text>
        <dbReference type="Rhea" id="RHEA:62628"/>
        <dbReference type="ChEBI" id="CHEBI:15377"/>
        <dbReference type="ChEBI" id="CHEBI:15378"/>
        <dbReference type="ChEBI" id="CHEBI:30879"/>
        <dbReference type="ChEBI" id="CHEBI:35924"/>
        <dbReference type="ChEBI" id="CHEBI:57540"/>
        <dbReference type="ChEBI" id="CHEBI:57945"/>
        <dbReference type="EC" id="1.11.1.26"/>
    </reaction>
</comment>
<comment type="subunit">
    <text evidence="1">Homodimer; disulfide-linked, upon oxidation. 5 homodimers assemble to form a ring-like decamer.</text>
</comment>
<comment type="subcellular location">
    <subcellularLocation>
        <location evidence="2">Cytoplasm</location>
    </subcellularLocation>
</comment>
<comment type="miscellaneous">
    <text evidence="1">The active site is a conserved redox-active cysteine residue, the peroxidatic cysteine (C(P)), which makes the nucleophilic attack on the peroxide substrate. The peroxide oxidizes the C(P)-SH to cysteine sulfenic acid (C(P)-SOH), which then reacts with another cysteine residue, the resolving cysteine (C(R)), to form a disulfide bridge. The disulfide is subsequently reduced by an appropriate electron donor to complete the catalytic cycle. In this typical 2-Cys peroxiredoxin, C(R) is provided by the other dimeric subunit to form an intersubunit disulfide. The disulfide is subsequently reduced by AhpF.</text>
</comment>
<comment type="similarity">
    <text evidence="4">Belongs to the peroxiredoxin family. AhpC/Prx1 subfamily.</text>
</comment>
<sequence>MSLINKEILPFTAQAFDPKKDQFKEVTQEDLKGSWSVVCFYPADFSFVCPTELEDLQNQYEELQKLGVNVFSVSTDTHFVHKAWHDHSDAISKITYTMIGDPSQTITRNFDVLDEATGLAQRGTFIIDPDGVVQASEINADGIGRDASTLAHKIKAAQYVRKNPGEVCPAKWEEGAKTLQPGLDLVGKI</sequence>